<comment type="similarity">
    <text evidence="1">Belongs to the SUI1 family.</text>
</comment>
<name>SUI1_HALS3</name>
<dbReference type="EMBL" id="AM774415">
    <property type="protein sequence ID" value="CAP14937.1"/>
    <property type="molecule type" value="Genomic_DNA"/>
</dbReference>
<dbReference type="SMR" id="B0R868"/>
<dbReference type="EnsemblBacteria" id="CAP14937">
    <property type="protein sequence ID" value="CAP14937"/>
    <property type="gene ID" value="OE_4626R"/>
</dbReference>
<dbReference type="KEGG" id="hsl:OE_4626R"/>
<dbReference type="HOGENOM" id="CLU_082805_6_1_2"/>
<dbReference type="PhylomeDB" id="B0R868"/>
<dbReference type="Proteomes" id="UP000001321">
    <property type="component" value="Chromosome"/>
</dbReference>
<dbReference type="GO" id="GO:0003729">
    <property type="term" value="F:mRNA binding"/>
    <property type="evidence" value="ECO:0007669"/>
    <property type="project" value="TreeGrafter"/>
</dbReference>
<dbReference type="GO" id="GO:0003743">
    <property type="term" value="F:translation initiation factor activity"/>
    <property type="evidence" value="ECO:0007669"/>
    <property type="project" value="InterPro"/>
</dbReference>
<dbReference type="GO" id="GO:0001731">
    <property type="term" value="P:formation of translation preinitiation complex"/>
    <property type="evidence" value="ECO:0007669"/>
    <property type="project" value="TreeGrafter"/>
</dbReference>
<dbReference type="GO" id="GO:0006417">
    <property type="term" value="P:regulation of translation"/>
    <property type="evidence" value="ECO:0007669"/>
    <property type="project" value="UniProtKB-UniRule"/>
</dbReference>
<dbReference type="GO" id="GO:0002188">
    <property type="term" value="P:translation reinitiation"/>
    <property type="evidence" value="ECO:0007669"/>
    <property type="project" value="TreeGrafter"/>
</dbReference>
<dbReference type="CDD" id="cd11567">
    <property type="entry name" value="YciH_like"/>
    <property type="match status" value="1"/>
</dbReference>
<dbReference type="FunFam" id="3.30.780.10:FF:000006">
    <property type="entry name" value="Protein translation factor SUI1 homolog"/>
    <property type="match status" value="1"/>
</dbReference>
<dbReference type="Gene3D" id="3.30.780.10">
    <property type="entry name" value="SUI1-like domain"/>
    <property type="match status" value="1"/>
</dbReference>
<dbReference type="HAMAP" id="MF_00604">
    <property type="entry name" value="SUI1"/>
    <property type="match status" value="1"/>
</dbReference>
<dbReference type="InterPro" id="IPR050318">
    <property type="entry name" value="DENR/SUI1_TIF"/>
</dbReference>
<dbReference type="InterPro" id="IPR001950">
    <property type="entry name" value="SUI1"/>
</dbReference>
<dbReference type="InterPro" id="IPR022851">
    <property type="entry name" value="SUI1_arc"/>
</dbReference>
<dbReference type="InterPro" id="IPR005872">
    <property type="entry name" value="SUI1_arc_bac"/>
</dbReference>
<dbReference type="InterPro" id="IPR036877">
    <property type="entry name" value="SUI1_dom_sf"/>
</dbReference>
<dbReference type="NCBIfam" id="NF002096">
    <property type="entry name" value="PRK00939.1"/>
    <property type="match status" value="1"/>
</dbReference>
<dbReference type="NCBIfam" id="TIGR01158">
    <property type="entry name" value="SUI1_rel"/>
    <property type="match status" value="1"/>
</dbReference>
<dbReference type="PANTHER" id="PTHR12789:SF0">
    <property type="entry name" value="DENSITY-REGULATED PROTEIN"/>
    <property type="match status" value="1"/>
</dbReference>
<dbReference type="PANTHER" id="PTHR12789">
    <property type="entry name" value="DENSITY-REGULATED PROTEIN HOMOLOG"/>
    <property type="match status" value="1"/>
</dbReference>
<dbReference type="Pfam" id="PF01253">
    <property type="entry name" value="SUI1"/>
    <property type="match status" value="1"/>
</dbReference>
<dbReference type="PIRSF" id="PIRSF037511">
    <property type="entry name" value="Transl_init_SUI1_pro"/>
    <property type="match status" value="1"/>
</dbReference>
<dbReference type="SUPFAM" id="SSF55159">
    <property type="entry name" value="eIF1-like"/>
    <property type="match status" value="1"/>
</dbReference>
<dbReference type="PROSITE" id="PS50296">
    <property type="entry name" value="SUI1"/>
    <property type="match status" value="1"/>
</dbReference>
<evidence type="ECO:0000255" key="1">
    <source>
        <dbReference type="HAMAP-Rule" id="MF_00604"/>
    </source>
</evidence>
<reference key="1">
    <citation type="journal article" date="2008" name="Genomics">
        <title>Evolution in the laboratory: the genome of Halobacterium salinarum strain R1 compared to that of strain NRC-1.</title>
        <authorList>
            <person name="Pfeiffer F."/>
            <person name="Schuster S.C."/>
            <person name="Broicher A."/>
            <person name="Falb M."/>
            <person name="Palm P."/>
            <person name="Rodewald K."/>
            <person name="Ruepp A."/>
            <person name="Soppa J."/>
            <person name="Tittor J."/>
            <person name="Oesterhelt D."/>
        </authorList>
    </citation>
    <scope>NUCLEOTIDE SEQUENCE [LARGE SCALE GENOMIC DNA]</scope>
    <source>
        <strain>ATCC 29341 / DSM 671 / R1</strain>
    </source>
</reference>
<feature type="chain" id="PRO_1000130114" description="Protein translation factor SUI1 homolog">
    <location>
        <begin position="1"/>
        <end position="97"/>
    </location>
</feature>
<gene>
    <name type="ordered locus">OE_4626R</name>
</gene>
<keyword id="KW-0648">Protein biosynthesis</keyword>
<keyword id="KW-0810">Translation regulation</keyword>
<proteinExistence type="inferred from homology"/>
<accession>B0R868</accession>
<organism>
    <name type="scientific">Halobacterium salinarum (strain ATCC 29341 / DSM 671 / R1)</name>
    <dbReference type="NCBI Taxonomy" id="478009"/>
    <lineage>
        <taxon>Archaea</taxon>
        <taxon>Methanobacteriati</taxon>
        <taxon>Methanobacteriota</taxon>
        <taxon>Stenosarchaea group</taxon>
        <taxon>Halobacteria</taxon>
        <taxon>Halobacteriales</taxon>
        <taxon>Halobacteriaceae</taxon>
        <taxon>Halobacterium</taxon>
        <taxon>Halobacterium salinarum NRC-34001</taxon>
    </lineage>
</organism>
<sequence length="97" mass="10716">MSEVCSTCGLPEELCVCEDVAKESQQIEIRIDERRYGKEVTVIEGFDPKDVDLDSLSSDLKSKFACGGTVEDGEIELQGNHSGRVEDFLRNKGFNVA</sequence>
<protein>
    <recommendedName>
        <fullName evidence="1">Protein translation factor SUI1 homolog</fullName>
    </recommendedName>
</protein>